<comment type="function">
    <text evidence="1">Has an important function as a repair enzyme for proteins that have been inactivated by oxidation. Catalyzes the reversible oxidation-reduction of methionine sulfoxide in proteins to methionine.</text>
</comment>
<comment type="catalytic activity">
    <reaction evidence="1">
        <text>L-methionyl-[protein] + [thioredoxin]-disulfide + H2O = L-methionyl-(S)-S-oxide-[protein] + [thioredoxin]-dithiol</text>
        <dbReference type="Rhea" id="RHEA:14217"/>
        <dbReference type="Rhea" id="RHEA-COMP:10698"/>
        <dbReference type="Rhea" id="RHEA-COMP:10700"/>
        <dbReference type="Rhea" id="RHEA-COMP:12313"/>
        <dbReference type="Rhea" id="RHEA-COMP:12315"/>
        <dbReference type="ChEBI" id="CHEBI:15377"/>
        <dbReference type="ChEBI" id="CHEBI:16044"/>
        <dbReference type="ChEBI" id="CHEBI:29950"/>
        <dbReference type="ChEBI" id="CHEBI:44120"/>
        <dbReference type="ChEBI" id="CHEBI:50058"/>
        <dbReference type="EC" id="1.8.4.11"/>
    </reaction>
</comment>
<comment type="catalytic activity">
    <reaction evidence="1">
        <text>[thioredoxin]-disulfide + L-methionine + H2O = L-methionine (S)-S-oxide + [thioredoxin]-dithiol</text>
        <dbReference type="Rhea" id="RHEA:19993"/>
        <dbReference type="Rhea" id="RHEA-COMP:10698"/>
        <dbReference type="Rhea" id="RHEA-COMP:10700"/>
        <dbReference type="ChEBI" id="CHEBI:15377"/>
        <dbReference type="ChEBI" id="CHEBI:29950"/>
        <dbReference type="ChEBI" id="CHEBI:50058"/>
        <dbReference type="ChEBI" id="CHEBI:57844"/>
        <dbReference type="ChEBI" id="CHEBI:58772"/>
        <dbReference type="EC" id="1.8.4.11"/>
    </reaction>
</comment>
<comment type="similarity">
    <text evidence="1">Belongs to the MsrA Met sulfoxide reductase family.</text>
</comment>
<organism>
    <name type="scientific">Escherichia coli (strain SMS-3-5 / SECEC)</name>
    <dbReference type="NCBI Taxonomy" id="439855"/>
    <lineage>
        <taxon>Bacteria</taxon>
        <taxon>Pseudomonadati</taxon>
        <taxon>Pseudomonadota</taxon>
        <taxon>Gammaproteobacteria</taxon>
        <taxon>Enterobacterales</taxon>
        <taxon>Enterobacteriaceae</taxon>
        <taxon>Escherichia</taxon>
    </lineage>
</organism>
<sequence>MSLFDKKHLVSPADALPGRNTPMPVATLHAVNGHSMTNVPDGMEIAIFAMGCFWGVERLFWQLPGVYSTAAGYTGGYTPNPTYREVCSGDTGHAEAVRIVYDPSVISYEQLLQVFWENHDPAQGMRQGNDHGTQYRSAIYPLTPEQDAAARASLERFQAAMLAADDDRRITTEIANATPFYYAEDDHQQYLHKNPYGYCGICGIGVCLPPEA</sequence>
<proteinExistence type="inferred from homology"/>
<gene>
    <name evidence="1" type="primary">msrA</name>
    <name type="ordered locus">EcSMS35_4697</name>
</gene>
<evidence type="ECO:0000255" key="1">
    <source>
        <dbReference type="HAMAP-Rule" id="MF_01401"/>
    </source>
</evidence>
<feature type="chain" id="PRO_1000145406" description="Peptide methionine sulfoxide reductase MsrA">
    <location>
        <begin position="1"/>
        <end position="212"/>
    </location>
</feature>
<feature type="active site" evidence="1">
    <location>
        <position position="52"/>
    </location>
</feature>
<dbReference type="EC" id="1.8.4.11" evidence="1"/>
<dbReference type="EMBL" id="CP000970">
    <property type="protein sequence ID" value="ACB15722.1"/>
    <property type="molecule type" value="Genomic_DNA"/>
</dbReference>
<dbReference type="RefSeq" id="WP_012311599.1">
    <property type="nucleotide sequence ID" value="NC_010498.1"/>
</dbReference>
<dbReference type="BMRB" id="B1LRA3"/>
<dbReference type="SMR" id="B1LRA3"/>
<dbReference type="KEGG" id="ecm:EcSMS35_4697"/>
<dbReference type="HOGENOM" id="CLU_031040_10_3_6"/>
<dbReference type="Proteomes" id="UP000007011">
    <property type="component" value="Chromosome"/>
</dbReference>
<dbReference type="GO" id="GO:0005737">
    <property type="term" value="C:cytoplasm"/>
    <property type="evidence" value="ECO:0007669"/>
    <property type="project" value="TreeGrafter"/>
</dbReference>
<dbReference type="GO" id="GO:0036456">
    <property type="term" value="F:L-methionine-(S)-S-oxide reductase activity"/>
    <property type="evidence" value="ECO:0007669"/>
    <property type="project" value="TreeGrafter"/>
</dbReference>
<dbReference type="GO" id="GO:0008113">
    <property type="term" value="F:peptide-methionine (S)-S-oxide reductase activity"/>
    <property type="evidence" value="ECO:0007669"/>
    <property type="project" value="UniProtKB-UniRule"/>
</dbReference>
<dbReference type="GO" id="GO:0034599">
    <property type="term" value="P:cellular response to oxidative stress"/>
    <property type="evidence" value="ECO:0007669"/>
    <property type="project" value="TreeGrafter"/>
</dbReference>
<dbReference type="GO" id="GO:0036211">
    <property type="term" value="P:protein modification process"/>
    <property type="evidence" value="ECO:0007669"/>
    <property type="project" value="UniProtKB-UniRule"/>
</dbReference>
<dbReference type="FunFam" id="3.30.1060.10:FF:000001">
    <property type="entry name" value="Peptide methionine sulfoxide reductase MsrA"/>
    <property type="match status" value="1"/>
</dbReference>
<dbReference type="Gene3D" id="3.30.1060.10">
    <property type="entry name" value="Peptide methionine sulphoxide reductase MsrA"/>
    <property type="match status" value="1"/>
</dbReference>
<dbReference type="HAMAP" id="MF_01401">
    <property type="entry name" value="MsrA"/>
    <property type="match status" value="1"/>
</dbReference>
<dbReference type="InterPro" id="IPR002569">
    <property type="entry name" value="Met_Sox_Rdtase_MsrA_dom"/>
</dbReference>
<dbReference type="InterPro" id="IPR036509">
    <property type="entry name" value="Met_Sox_Rdtase_MsrA_sf"/>
</dbReference>
<dbReference type="InterPro" id="IPR050162">
    <property type="entry name" value="MsrA_MetSO_reductase"/>
</dbReference>
<dbReference type="NCBIfam" id="TIGR00401">
    <property type="entry name" value="msrA"/>
    <property type="match status" value="1"/>
</dbReference>
<dbReference type="PANTHER" id="PTHR42799">
    <property type="entry name" value="MITOCHONDRIAL PEPTIDE METHIONINE SULFOXIDE REDUCTASE"/>
    <property type="match status" value="1"/>
</dbReference>
<dbReference type="PANTHER" id="PTHR42799:SF2">
    <property type="entry name" value="MITOCHONDRIAL PEPTIDE METHIONINE SULFOXIDE REDUCTASE"/>
    <property type="match status" value="1"/>
</dbReference>
<dbReference type="Pfam" id="PF01625">
    <property type="entry name" value="PMSR"/>
    <property type="match status" value="1"/>
</dbReference>
<dbReference type="SUPFAM" id="SSF55068">
    <property type="entry name" value="Peptide methionine sulfoxide reductase"/>
    <property type="match status" value="1"/>
</dbReference>
<protein>
    <recommendedName>
        <fullName evidence="1">Peptide methionine sulfoxide reductase MsrA</fullName>
        <shortName evidence="1">Protein-methionine-S-oxide reductase</shortName>
        <ecNumber evidence="1">1.8.4.11</ecNumber>
    </recommendedName>
    <alternativeName>
        <fullName evidence="1">Peptide-methionine (S)-S-oxide reductase</fullName>
        <shortName evidence="1">Peptide Met(O) reductase</shortName>
    </alternativeName>
</protein>
<keyword id="KW-0560">Oxidoreductase</keyword>
<reference key="1">
    <citation type="journal article" date="2008" name="J. Bacteriol.">
        <title>Insights into the environmental resistance gene pool from the genome sequence of the multidrug-resistant environmental isolate Escherichia coli SMS-3-5.</title>
        <authorList>
            <person name="Fricke W.F."/>
            <person name="Wright M.S."/>
            <person name="Lindell A.H."/>
            <person name="Harkins D.M."/>
            <person name="Baker-Austin C."/>
            <person name="Ravel J."/>
            <person name="Stepanauskas R."/>
        </authorList>
    </citation>
    <scope>NUCLEOTIDE SEQUENCE [LARGE SCALE GENOMIC DNA]</scope>
    <source>
        <strain>SMS-3-5 / SECEC</strain>
    </source>
</reference>
<name>MSRA_ECOSM</name>
<accession>B1LRA3</accession>